<gene>
    <name type="primary">yngE</name>
    <name type="ordered locus">BSU18210</name>
</gene>
<sequence>MLMDYEKERTERAERIRKGGAEKYHQSNREKGKLFVRERLSLLFDDDIELEDAFFAECMSDGLPADGVVTAIGKIGGQTVCVMANDSTVKAGSWGAKTVEKIIRIQEIAEKLNCPLIYLVDSAGARITDQINVFPGRRGAGRIFYNQVKLSGRIPQICLLFGPSAAGGAYIPAFCDIVVMVDGNASMYLGSPRMAEMVIGEKVSLEEMGGARMHCSISGCGDILAETEEEAIQLVRAYLSYFPANFQEKAPIHEKRPPKHFETPLADVIPQNQNAPFDMHELIERVIDEDSFFEIKALFAPELLTGLARIHGQPVGIVANQPKVKGGVLFHDSADKAAKFITLCDAFHIPLLFLADIPGFMIGTKVEQAGIIRHGAKMISAMSEATVPKLSVIVRKAYGAGLYAMAGPAFEPDCCLALPTAQIAVMGPEAAVNAVYAKKIAELPEEERAAFISSKREEYKEDINIYRLASEMIIDAVIPANSLRDELAKRLKAYMTKEMTFTNRKHPVYPV</sequence>
<keyword id="KW-0067">ATP-binding</keyword>
<keyword id="KW-0436">Ligase</keyword>
<keyword id="KW-0547">Nucleotide-binding</keyword>
<keyword id="KW-1185">Reference proteome</keyword>
<organism>
    <name type="scientific">Bacillus subtilis (strain 168)</name>
    <dbReference type="NCBI Taxonomy" id="224308"/>
    <lineage>
        <taxon>Bacteria</taxon>
        <taxon>Bacillati</taxon>
        <taxon>Bacillota</taxon>
        <taxon>Bacilli</taxon>
        <taxon>Bacillales</taxon>
        <taxon>Bacillaceae</taxon>
        <taxon>Bacillus</taxon>
    </lineage>
</organism>
<accession>O31825</accession>
<accession>Q799L5</accession>
<reference key="1">
    <citation type="journal article" date="1997" name="Nature">
        <title>The complete genome sequence of the Gram-positive bacterium Bacillus subtilis.</title>
        <authorList>
            <person name="Kunst F."/>
            <person name="Ogasawara N."/>
            <person name="Moszer I."/>
            <person name="Albertini A.M."/>
            <person name="Alloni G."/>
            <person name="Azevedo V."/>
            <person name="Bertero M.G."/>
            <person name="Bessieres P."/>
            <person name="Bolotin A."/>
            <person name="Borchert S."/>
            <person name="Borriss R."/>
            <person name="Boursier L."/>
            <person name="Brans A."/>
            <person name="Braun M."/>
            <person name="Brignell S.C."/>
            <person name="Bron S."/>
            <person name="Brouillet S."/>
            <person name="Bruschi C.V."/>
            <person name="Caldwell B."/>
            <person name="Capuano V."/>
            <person name="Carter N.M."/>
            <person name="Choi S.-K."/>
            <person name="Codani J.-J."/>
            <person name="Connerton I.F."/>
            <person name="Cummings N.J."/>
            <person name="Daniel R.A."/>
            <person name="Denizot F."/>
            <person name="Devine K.M."/>
            <person name="Duesterhoeft A."/>
            <person name="Ehrlich S.D."/>
            <person name="Emmerson P.T."/>
            <person name="Entian K.-D."/>
            <person name="Errington J."/>
            <person name="Fabret C."/>
            <person name="Ferrari E."/>
            <person name="Foulger D."/>
            <person name="Fritz C."/>
            <person name="Fujita M."/>
            <person name="Fujita Y."/>
            <person name="Fuma S."/>
            <person name="Galizzi A."/>
            <person name="Galleron N."/>
            <person name="Ghim S.-Y."/>
            <person name="Glaser P."/>
            <person name="Goffeau A."/>
            <person name="Golightly E.J."/>
            <person name="Grandi G."/>
            <person name="Guiseppi G."/>
            <person name="Guy B.J."/>
            <person name="Haga K."/>
            <person name="Haiech J."/>
            <person name="Harwood C.R."/>
            <person name="Henaut A."/>
            <person name="Hilbert H."/>
            <person name="Holsappel S."/>
            <person name="Hosono S."/>
            <person name="Hullo M.-F."/>
            <person name="Itaya M."/>
            <person name="Jones L.-M."/>
            <person name="Joris B."/>
            <person name="Karamata D."/>
            <person name="Kasahara Y."/>
            <person name="Klaerr-Blanchard M."/>
            <person name="Klein C."/>
            <person name="Kobayashi Y."/>
            <person name="Koetter P."/>
            <person name="Koningstein G."/>
            <person name="Krogh S."/>
            <person name="Kumano M."/>
            <person name="Kurita K."/>
            <person name="Lapidus A."/>
            <person name="Lardinois S."/>
            <person name="Lauber J."/>
            <person name="Lazarevic V."/>
            <person name="Lee S.-M."/>
            <person name="Levine A."/>
            <person name="Liu H."/>
            <person name="Masuda S."/>
            <person name="Mauel C."/>
            <person name="Medigue C."/>
            <person name="Medina N."/>
            <person name="Mellado R.P."/>
            <person name="Mizuno M."/>
            <person name="Moestl D."/>
            <person name="Nakai S."/>
            <person name="Noback M."/>
            <person name="Noone D."/>
            <person name="O'Reilly M."/>
            <person name="Ogawa K."/>
            <person name="Ogiwara A."/>
            <person name="Oudega B."/>
            <person name="Park S.-H."/>
            <person name="Parro V."/>
            <person name="Pohl T.M."/>
            <person name="Portetelle D."/>
            <person name="Porwollik S."/>
            <person name="Prescott A.M."/>
            <person name="Presecan E."/>
            <person name="Pujic P."/>
            <person name="Purnelle B."/>
            <person name="Rapoport G."/>
            <person name="Rey M."/>
            <person name="Reynolds S."/>
            <person name="Rieger M."/>
            <person name="Rivolta C."/>
            <person name="Rocha E."/>
            <person name="Roche B."/>
            <person name="Rose M."/>
            <person name="Sadaie Y."/>
            <person name="Sato T."/>
            <person name="Scanlan E."/>
            <person name="Schleich S."/>
            <person name="Schroeter R."/>
            <person name="Scoffone F."/>
            <person name="Sekiguchi J."/>
            <person name="Sekowska A."/>
            <person name="Seror S.J."/>
            <person name="Serror P."/>
            <person name="Shin B.-S."/>
            <person name="Soldo B."/>
            <person name="Sorokin A."/>
            <person name="Tacconi E."/>
            <person name="Takagi T."/>
            <person name="Takahashi H."/>
            <person name="Takemaru K."/>
            <person name="Takeuchi M."/>
            <person name="Tamakoshi A."/>
            <person name="Tanaka T."/>
            <person name="Terpstra P."/>
            <person name="Tognoni A."/>
            <person name="Tosato V."/>
            <person name="Uchiyama S."/>
            <person name="Vandenbol M."/>
            <person name="Vannier F."/>
            <person name="Vassarotti A."/>
            <person name="Viari A."/>
            <person name="Wambutt R."/>
            <person name="Wedler E."/>
            <person name="Wedler H."/>
            <person name="Weitzenegger T."/>
            <person name="Winters P."/>
            <person name="Wipat A."/>
            <person name="Yamamoto H."/>
            <person name="Yamane K."/>
            <person name="Yasumoto K."/>
            <person name="Yata K."/>
            <person name="Yoshida K."/>
            <person name="Yoshikawa H.-F."/>
            <person name="Zumstein E."/>
            <person name="Yoshikawa H."/>
            <person name="Danchin A."/>
        </authorList>
    </citation>
    <scope>NUCLEOTIDE SEQUENCE [LARGE SCALE GENOMIC DNA]</scope>
    <source>
        <strain>168</strain>
    </source>
</reference>
<reference key="2">
    <citation type="journal article" date="2009" name="Microbiology">
        <title>From a consortium sequence to a unified sequence: the Bacillus subtilis 168 reference genome a decade later.</title>
        <authorList>
            <person name="Barbe V."/>
            <person name="Cruveiller S."/>
            <person name="Kunst F."/>
            <person name="Lenoble P."/>
            <person name="Meurice G."/>
            <person name="Sekowska A."/>
            <person name="Vallenet D."/>
            <person name="Wang T."/>
            <person name="Moszer I."/>
            <person name="Medigue C."/>
            <person name="Danchin A."/>
        </authorList>
    </citation>
    <scope>SEQUENCE REVISION</scope>
</reference>
<reference key="3">
    <citation type="journal article" date="1997" name="Microbiology">
        <title>Sequence completion, identification and definition of the fengycin operon in Bacillus subtilis 168.</title>
        <authorList>
            <person name="Tosato V."/>
            <person name="Albertini A.M."/>
            <person name="Zotti M."/>
            <person name="Sonda S."/>
            <person name="Bruschi C.V."/>
        </authorList>
    </citation>
    <scope>NUCLEOTIDE SEQUENCE [GENOMIC DNA] OF 1-282</scope>
    <source>
        <strain>168</strain>
    </source>
</reference>
<name>YNGE_BACSU</name>
<dbReference type="EC" id="6.4.1.-"/>
<dbReference type="EMBL" id="AL009126">
    <property type="protein sequence ID" value="CAB13704.2"/>
    <property type="molecule type" value="Genomic_DNA"/>
</dbReference>
<dbReference type="EMBL" id="Y13917">
    <property type="protein sequence ID" value="CAA74219.1"/>
    <property type="status" value="ALT_INIT"/>
    <property type="molecule type" value="Genomic_DNA"/>
</dbReference>
<dbReference type="RefSeq" id="WP_003231527.1">
    <property type="nucleotide sequence ID" value="NZ_OZ025638.1"/>
</dbReference>
<dbReference type="SMR" id="O31825"/>
<dbReference type="FunCoup" id="O31825">
    <property type="interactions" value="401"/>
</dbReference>
<dbReference type="STRING" id="224308.BSU18210"/>
<dbReference type="PaxDb" id="224308-BSU18210"/>
<dbReference type="EnsemblBacteria" id="CAB13704">
    <property type="protein sequence ID" value="CAB13704"/>
    <property type="gene ID" value="BSU_18210"/>
</dbReference>
<dbReference type="GeneID" id="939528"/>
<dbReference type="KEGG" id="bsu:BSU18210"/>
<dbReference type="PATRIC" id="fig|224308.43.peg.1930"/>
<dbReference type="eggNOG" id="COG4799">
    <property type="taxonomic scope" value="Bacteria"/>
</dbReference>
<dbReference type="InParanoid" id="O31825"/>
<dbReference type="OrthoDB" id="9803706at2"/>
<dbReference type="PhylomeDB" id="O31825"/>
<dbReference type="BioCyc" id="BSUB:BSU18210-MONOMER"/>
<dbReference type="Proteomes" id="UP000001570">
    <property type="component" value="Chromosome"/>
</dbReference>
<dbReference type="GO" id="GO:1905202">
    <property type="term" value="C:methylcrotonoyl-CoA carboxylase complex"/>
    <property type="evidence" value="ECO:0000318"/>
    <property type="project" value="GO_Central"/>
</dbReference>
<dbReference type="GO" id="GO:0005524">
    <property type="term" value="F:ATP binding"/>
    <property type="evidence" value="ECO:0007669"/>
    <property type="project" value="UniProtKB-KW"/>
</dbReference>
<dbReference type="GO" id="GO:0016874">
    <property type="term" value="F:ligase activity"/>
    <property type="evidence" value="ECO:0007669"/>
    <property type="project" value="UniProtKB-KW"/>
</dbReference>
<dbReference type="GO" id="GO:0006552">
    <property type="term" value="P:L-leucine catabolic process"/>
    <property type="evidence" value="ECO:0000318"/>
    <property type="project" value="GO_Central"/>
</dbReference>
<dbReference type="FunFam" id="3.90.226.10:FF:000041">
    <property type="entry name" value="Propionyl-CoA carboxylase subunit beta"/>
    <property type="match status" value="1"/>
</dbReference>
<dbReference type="Gene3D" id="3.90.226.10">
    <property type="entry name" value="2-enoyl-CoA Hydratase, Chain A, domain 1"/>
    <property type="match status" value="2"/>
</dbReference>
<dbReference type="InterPro" id="IPR034733">
    <property type="entry name" value="AcCoA_carboxyl_beta"/>
</dbReference>
<dbReference type="InterPro" id="IPR029045">
    <property type="entry name" value="ClpP/crotonase-like_dom_sf"/>
</dbReference>
<dbReference type="InterPro" id="IPR011763">
    <property type="entry name" value="COA_CT_C"/>
</dbReference>
<dbReference type="InterPro" id="IPR011762">
    <property type="entry name" value="COA_CT_N"/>
</dbReference>
<dbReference type="InterPro" id="IPR045190">
    <property type="entry name" value="MCCB/AccD1-like"/>
</dbReference>
<dbReference type="PANTHER" id="PTHR22855">
    <property type="entry name" value="ACETYL, PROPIONYL, PYRUVATE, AND GLUTACONYL CARBOXYLASE-RELATED"/>
    <property type="match status" value="1"/>
</dbReference>
<dbReference type="PANTHER" id="PTHR22855:SF13">
    <property type="entry name" value="METHYLCROTONOYL-COA CARBOXYLASE BETA CHAIN, MITOCHONDRIAL"/>
    <property type="match status" value="1"/>
</dbReference>
<dbReference type="Pfam" id="PF01039">
    <property type="entry name" value="Carboxyl_trans"/>
    <property type="match status" value="1"/>
</dbReference>
<dbReference type="SUPFAM" id="SSF52096">
    <property type="entry name" value="ClpP/crotonase"/>
    <property type="match status" value="2"/>
</dbReference>
<dbReference type="PROSITE" id="PS50989">
    <property type="entry name" value="COA_CT_CTER"/>
    <property type="match status" value="1"/>
</dbReference>
<dbReference type="PROSITE" id="PS50980">
    <property type="entry name" value="COA_CT_NTER"/>
    <property type="match status" value="1"/>
</dbReference>
<protein>
    <recommendedName>
        <fullName>Uncharacterized carboxylase YngE</fullName>
        <ecNumber>6.4.1.-</ecNumber>
    </recommendedName>
</protein>
<comment type="similarity">
    <text evidence="4">Belongs to the AccD/PCCB family.</text>
</comment>
<comment type="sequence caution" evidence="4">
    <conflict type="erroneous initiation">
        <sequence resource="EMBL-CDS" id="CAA74219"/>
    </conflict>
</comment>
<evidence type="ECO:0000255" key="1">
    <source>
        <dbReference type="PROSITE-ProRule" id="PRU01136"/>
    </source>
</evidence>
<evidence type="ECO:0000255" key="2">
    <source>
        <dbReference type="PROSITE-ProRule" id="PRU01137"/>
    </source>
</evidence>
<evidence type="ECO:0000255" key="3">
    <source>
        <dbReference type="PROSITE-ProRule" id="PRU01138"/>
    </source>
</evidence>
<evidence type="ECO:0000305" key="4"/>
<proteinExistence type="inferred from homology"/>
<feature type="chain" id="PRO_0000389136" description="Uncharacterized carboxylase YngE">
    <location>
        <begin position="1"/>
        <end position="511"/>
    </location>
</feature>
<feature type="domain" description="CoA carboxyltransferase N-terminal" evidence="1">
    <location>
        <begin position="2"/>
        <end position="254"/>
    </location>
</feature>
<feature type="domain" description="CoA carboxyltransferase C-terminal" evidence="2">
    <location>
        <begin position="260"/>
        <end position="506"/>
    </location>
</feature>
<feature type="region of interest" description="Carboxyltransferase" evidence="3">
    <location>
        <begin position="2"/>
        <end position="506"/>
    </location>
</feature>